<proteinExistence type="evidence at protein level"/>
<reference key="1">
    <citation type="journal article" date="2010" name="Nat. Biotechnol.">
        <title>Draft genome sequence of the oilseed species Ricinus communis.</title>
        <authorList>
            <person name="Chan A.P."/>
            <person name="Crabtree J."/>
            <person name="Zhao Q."/>
            <person name="Lorenzi H."/>
            <person name="Orvis J."/>
            <person name="Puiu D."/>
            <person name="Melake-Berhan A."/>
            <person name="Jones K.M."/>
            <person name="Redman J."/>
            <person name="Chen G."/>
            <person name="Cahoon E.B."/>
            <person name="Gedil M."/>
            <person name="Stanke M."/>
            <person name="Haas B.J."/>
            <person name="Wortman J.R."/>
            <person name="Fraser-Liggett C.M."/>
            <person name="Ravel J."/>
            <person name="Rabinowicz P.D."/>
        </authorList>
    </citation>
    <scope>NUCLEOTIDE SEQUENCE [LARGE SCALE GENOMIC DNA]</scope>
    <source>
        <strain>cv. Hale</strain>
    </source>
</reference>
<reference key="2">
    <citation type="journal article" date="2014" name="Phytochemistry">
        <title>Biochemical characterization of the castor bean ent-kaurene synthase(-like) family supports quantum chemical view of diterpene cyclization.</title>
        <authorList>
            <person name="Jackson A.J."/>
            <person name="Hershey D.M."/>
            <person name="Chesnut T."/>
            <person name="Xu M."/>
            <person name="Peters R.J."/>
        </authorList>
    </citation>
    <scope>FUNCTION</scope>
    <scope>CATALYTIC ACTIVITY</scope>
    <scope>PATHWAY</scope>
    <scope>GENE FAMILY</scope>
    <scope>NOMENCLATURE</scope>
</reference>
<name>KSL4_RICCO</name>
<organism>
    <name type="scientific">Ricinus communis</name>
    <name type="common">Castor bean</name>
    <dbReference type="NCBI Taxonomy" id="3988"/>
    <lineage>
        <taxon>Eukaryota</taxon>
        <taxon>Viridiplantae</taxon>
        <taxon>Streptophyta</taxon>
        <taxon>Embryophyta</taxon>
        <taxon>Tracheophyta</taxon>
        <taxon>Spermatophyta</taxon>
        <taxon>Magnoliopsida</taxon>
        <taxon>eudicotyledons</taxon>
        <taxon>Gunneridae</taxon>
        <taxon>Pentapetalae</taxon>
        <taxon>rosids</taxon>
        <taxon>fabids</taxon>
        <taxon>Malpighiales</taxon>
        <taxon>Euphorbiaceae</taxon>
        <taxon>Acalyphoideae</taxon>
        <taxon>Acalypheae</taxon>
        <taxon>Ricinus</taxon>
    </lineage>
</organism>
<comment type="function">
    <text evidence="4">Diterpene cyclase involved in the biosynthesis of labdane-related diterpenoids (LRDs) natural products (PubMed:24810014). Catalyzes the cyclization of ent-CDP into ent-beyerene as a major and ent-kaurene and ent-atiserene as minor products (PubMed:24810014).</text>
</comment>
<comment type="catalytic activity">
    <reaction evidence="4">
        <text>ent-copalyl diphosphate = ent-beyerene + diphosphate</text>
        <dbReference type="Rhea" id="RHEA:79011"/>
        <dbReference type="ChEBI" id="CHEBI:33019"/>
        <dbReference type="ChEBI" id="CHEBI:58553"/>
        <dbReference type="ChEBI" id="CHEBI:229601"/>
        <dbReference type="EC" id="4.2.3.229"/>
    </reaction>
    <physiologicalReaction direction="left-to-right" evidence="4">
        <dbReference type="Rhea" id="RHEA:79012"/>
    </physiologicalReaction>
</comment>
<comment type="catalytic activity">
    <reaction evidence="4">
        <text>ent-copalyl diphosphate = ent-atiserene + diphosphate</text>
        <dbReference type="Rhea" id="RHEA:54496"/>
        <dbReference type="ChEBI" id="CHEBI:33019"/>
        <dbReference type="ChEBI" id="CHEBI:58553"/>
        <dbReference type="ChEBI" id="CHEBI:138219"/>
        <dbReference type="EC" id="4.2.3.185"/>
    </reaction>
    <physiologicalReaction direction="left-to-right" evidence="4">
        <dbReference type="Rhea" id="RHEA:54497"/>
    </physiologicalReaction>
</comment>
<comment type="catalytic activity">
    <reaction evidence="4">
        <text>ent-copalyl diphosphate = ent-kaur-16-ene + diphosphate</text>
        <dbReference type="Rhea" id="RHEA:22220"/>
        <dbReference type="ChEBI" id="CHEBI:15415"/>
        <dbReference type="ChEBI" id="CHEBI:33019"/>
        <dbReference type="ChEBI" id="CHEBI:58553"/>
        <dbReference type="EC" id="4.2.3.19"/>
    </reaction>
    <physiologicalReaction direction="left-to-right" evidence="4">
        <dbReference type="Rhea" id="RHEA:22221"/>
    </physiologicalReaction>
</comment>
<comment type="cofactor">
    <cofactor evidence="1">
        <name>Mg(2+)</name>
        <dbReference type="ChEBI" id="CHEBI:18420"/>
    </cofactor>
    <text evidence="1">Binds 3 Mg(2+) ions per subunit.</text>
</comment>
<comment type="pathway">
    <text evidence="4">Secondary metabolite biosynthesis; terpenoid biosynthesis.</text>
</comment>
<comment type="subcellular location">
    <subcellularLocation>
        <location evidence="2">Plastid</location>
        <location evidence="2">Chloroplast</location>
    </subcellularLocation>
</comment>
<comment type="domain">
    <text evidence="1">The Asp-Asp-Xaa-Xaa-Asp/Glu (DDXXD/E) motif is important for the catalytic activity, presumably through binding to Mg(2+).</text>
</comment>
<comment type="similarity">
    <text evidence="6">Belongs to the terpene synthase family.</text>
</comment>
<comment type="sequence caution" evidence="6">
    <conflict type="erroneous gene model prediction">
        <sequence resource="EMBL-CDS" id="EEF36536"/>
    </conflict>
</comment>
<gene>
    <name evidence="5" type="primary">KSL4</name>
    <name evidence="7" type="ORF">RCOM_0823640</name>
</gene>
<sequence>MLLGSTNTLRISSHGKEWEGKTLTGMPLGKVNQRVKVPASDSEGAITSKIKEMLSKVGLSVSSYDTAWVAMVPTLDSSKQPLFPKSLNWIMENQQSDGSWGLDLQHPLLIKDSLSSTLACVLALQKWNVGQQLIHKGLDFIQSNIWAAKDEHQHSPIGFDIIFPSMIEYGRDMGLNLSLNQSLVETMLLKRELETKSLKDKPSNLAYVAEGLNRLNDWKEVMKFQRSNGSLFNSPSSTAAALIHLHDGKCFEYLNSLAKQFGNAVPTIYPFDIYARLSIIDTLEKLGIDSYVSEDKERVLDDICRCWMQGSEEIFLDPTCCAMAFRLLRMNGYAISSDALANFDEKEKLLHTKDIKAMLELFKASQLEICEDESALCRIYAWTSNYLKEELVNGEIPDKSLQAEVDHALGHPHASMERKEIKNFIENYNADKVSLLKTSYRFCNANENYLLAFSFRDFNMYQSMHREELDDLERWVKQYGLDKLKYARQTIRSAYFSITSSLFQPNHSDARISWAQNTVLTTVVDDFFDFSGSMEELLNLIELIERWDEHTTIGFKSKEVEILFNALYGSVNDLADKAYIVQGRCVKRDLIDIWIILLKTMLKEAEWARDKNVPGMDEYIENGYISFALGPVILISLYLMEPLSEEVVTSKEYDNLFIHASIIGRLLNDRVTAKREFAQGKLNSVSLQVVGSNGAITEEEAKEEVTRIITSHRRELLRMVVQTEGSIVPKSCKNLFWTMSKLLHLFYMSEDGYSSPTKMLSAINAIVNEPIVLP</sequence>
<protein>
    <recommendedName>
        <fullName evidence="5">Ent-beyerene synthase KSL4, chloroplastic</fullName>
        <ecNumber evidence="3">4.2.3.229</ecNumber>
    </recommendedName>
    <alternativeName>
        <fullName evidence="5">Ent-atiserene synthase KSL4</fullName>
        <ecNumber evidence="3">4.2.3.185</ecNumber>
    </alternativeName>
    <alternativeName>
        <fullName evidence="5">Ent-kaurene synthase-like 4</fullName>
        <shortName evidence="5">RcKSL4</shortName>
        <ecNumber evidence="4">4.2.3.19</ecNumber>
    </alternativeName>
</protein>
<accession>B9SIM3</accession>
<evidence type="ECO:0000250" key="1">
    <source>
        <dbReference type="UniProtKB" id="Q40577"/>
    </source>
</evidence>
<evidence type="ECO:0000255" key="2"/>
<evidence type="ECO:0000269" key="3">
    <source>
    </source>
</evidence>
<evidence type="ECO:0000269" key="4">
    <source>
    </source>
</evidence>
<evidence type="ECO:0000303" key="5">
    <source>
    </source>
</evidence>
<evidence type="ECO:0000305" key="6"/>
<evidence type="ECO:0000312" key="7">
    <source>
        <dbReference type="EMBL" id="EEF36536.1"/>
    </source>
</evidence>
<dbReference type="EC" id="4.2.3.229" evidence="3"/>
<dbReference type="EC" id="4.2.3.185" evidence="3"/>
<dbReference type="EC" id="4.2.3.19" evidence="4"/>
<dbReference type="EMBL" id="EQ973975">
    <property type="protein sequence ID" value="EEF36536.1"/>
    <property type="status" value="ALT_SEQ"/>
    <property type="molecule type" value="Genomic_DNA"/>
</dbReference>
<dbReference type="SMR" id="B9SIM3"/>
<dbReference type="STRING" id="3988.B9SIM3"/>
<dbReference type="eggNOG" id="ENOG502QVGX">
    <property type="taxonomic scope" value="Eukaryota"/>
</dbReference>
<dbReference type="InParanoid" id="B9SIM3"/>
<dbReference type="UniPathway" id="UPA00213"/>
<dbReference type="Proteomes" id="UP000008311">
    <property type="component" value="Unassembled WGS sequence"/>
</dbReference>
<dbReference type="GO" id="GO:0009507">
    <property type="term" value="C:chloroplast"/>
    <property type="evidence" value="ECO:0000318"/>
    <property type="project" value="GO_Central"/>
</dbReference>
<dbReference type="GO" id="GO:0009899">
    <property type="term" value="F:ent-kaurene synthase activity"/>
    <property type="evidence" value="ECO:0007669"/>
    <property type="project" value="UniProtKB-EC"/>
</dbReference>
<dbReference type="GO" id="GO:0000287">
    <property type="term" value="F:magnesium ion binding"/>
    <property type="evidence" value="ECO:0000318"/>
    <property type="project" value="GO_Central"/>
</dbReference>
<dbReference type="GO" id="GO:0010333">
    <property type="term" value="F:terpene synthase activity"/>
    <property type="evidence" value="ECO:0000318"/>
    <property type="project" value="GO_Central"/>
</dbReference>
<dbReference type="GO" id="GO:0009686">
    <property type="term" value="P:gibberellin biosynthetic process"/>
    <property type="evidence" value="ECO:0000318"/>
    <property type="project" value="GO_Central"/>
</dbReference>
<dbReference type="FunFam" id="1.50.10.160:FF:000002">
    <property type="entry name" value="cis-abienol synthase, chloroplastic"/>
    <property type="match status" value="1"/>
</dbReference>
<dbReference type="FunFam" id="1.50.10.130:FF:000002">
    <property type="entry name" value="Ent-copalyl diphosphate synthase, chloroplastic"/>
    <property type="match status" value="1"/>
</dbReference>
<dbReference type="FunFam" id="1.10.600.10:FF:000005">
    <property type="entry name" value="Ent-kaur-16-ene synthase, chloroplastic"/>
    <property type="match status" value="1"/>
</dbReference>
<dbReference type="Gene3D" id="1.50.10.160">
    <property type="match status" value="1"/>
</dbReference>
<dbReference type="Gene3D" id="1.10.600.10">
    <property type="entry name" value="Farnesyl Diphosphate Synthase"/>
    <property type="match status" value="1"/>
</dbReference>
<dbReference type="Gene3D" id="1.50.10.130">
    <property type="entry name" value="Terpene synthase, N-terminal domain"/>
    <property type="match status" value="1"/>
</dbReference>
<dbReference type="InterPro" id="IPR008949">
    <property type="entry name" value="Isoprenoid_synthase_dom_sf"/>
</dbReference>
<dbReference type="InterPro" id="IPR001906">
    <property type="entry name" value="Terpene_synth_N"/>
</dbReference>
<dbReference type="InterPro" id="IPR036965">
    <property type="entry name" value="Terpene_synth_N_sf"/>
</dbReference>
<dbReference type="InterPro" id="IPR050148">
    <property type="entry name" value="Terpene_synthase-like"/>
</dbReference>
<dbReference type="InterPro" id="IPR005630">
    <property type="entry name" value="Terpene_synthase_metal-bd"/>
</dbReference>
<dbReference type="InterPro" id="IPR008930">
    <property type="entry name" value="Terpenoid_cyclase/PrenylTrfase"/>
</dbReference>
<dbReference type="PANTHER" id="PTHR31739">
    <property type="entry name" value="ENT-COPALYL DIPHOSPHATE SYNTHASE, CHLOROPLASTIC"/>
    <property type="match status" value="1"/>
</dbReference>
<dbReference type="PANTHER" id="PTHR31739:SF34">
    <property type="entry name" value="TERPENE SYNTHASE METAL-BINDING DOMAIN-CONTAINING PROTEIN"/>
    <property type="match status" value="1"/>
</dbReference>
<dbReference type="Pfam" id="PF01397">
    <property type="entry name" value="Terpene_synth"/>
    <property type="match status" value="1"/>
</dbReference>
<dbReference type="Pfam" id="PF03936">
    <property type="entry name" value="Terpene_synth_C"/>
    <property type="match status" value="1"/>
</dbReference>
<dbReference type="SFLD" id="SFLDG01014">
    <property type="entry name" value="Terpene_Cyclase_Like_1_N-term"/>
    <property type="match status" value="1"/>
</dbReference>
<dbReference type="SUPFAM" id="SSF48239">
    <property type="entry name" value="Terpenoid cyclases/Protein prenyltransferases"/>
    <property type="match status" value="2"/>
</dbReference>
<dbReference type="SUPFAM" id="SSF48576">
    <property type="entry name" value="Terpenoid synthases"/>
    <property type="match status" value="1"/>
</dbReference>
<keyword id="KW-0150">Chloroplast</keyword>
<keyword id="KW-0456">Lyase</keyword>
<keyword id="KW-0460">Magnesium</keyword>
<keyword id="KW-0479">Metal-binding</keyword>
<keyword id="KW-0934">Plastid</keyword>
<keyword id="KW-1185">Reference proteome</keyword>
<keyword id="KW-0809">Transit peptide</keyword>
<feature type="transit peptide" description="Chloroplast" evidence="2">
    <location>
        <begin position="1"/>
        <end position="35"/>
    </location>
</feature>
<feature type="chain" id="PRO_0000460913" description="Ent-beyerene synthase KSL4, chloroplastic">
    <location>
        <begin position="36"/>
        <end position="774"/>
    </location>
</feature>
<feature type="short sequence motif" description="DDXXD motif" evidence="1">
    <location>
        <begin position="525"/>
        <end position="529"/>
    </location>
</feature>
<feature type="binding site" evidence="1">
    <location>
        <position position="525"/>
    </location>
    <ligand>
        <name>Mg(2+)</name>
        <dbReference type="ChEBI" id="CHEBI:18420"/>
        <label>1</label>
    </ligand>
</feature>
<feature type="binding site" evidence="1">
    <location>
        <position position="525"/>
    </location>
    <ligand>
        <name>Mg(2+)</name>
        <dbReference type="ChEBI" id="CHEBI:18420"/>
        <label>2</label>
    </ligand>
</feature>
<feature type="binding site" evidence="1">
    <location>
        <position position="529"/>
    </location>
    <ligand>
        <name>Mg(2+)</name>
        <dbReference type="ChEBI" id="CHEBI:18420"/>
        <label>1</label>
    </ligand>
</feature>
<feature type="binding site" evidence="1">
    <location>
        <position position="529"/>
    </location>
    <ligand>
        <name>Mg(2+)</name>
        <dbReference type="ChEBI" id="CHEBI:18420"/>
        <label>2</label>
    </ligand>
</feature>
<feature type="binding site" evidence="1">
    <location>
        <position position="668"/>
    </location>
    <ligand>
        <name>Mg(2+)</name>
        <dbReference type="ChEBI" id="CHEBI:18420"/>
        <label>3</label>
    </ligand>
</feature>
<feature type="binding site" evidence="1">
    <location>
        <position position="669"/>
    </location>
    <ligand>
        <name>Mg(2+)</name>
        <dbReference type="ChEBI" id="CHEBI:18420"/>
        <label>3</label>
    </ligand>
</feature>
<feature type="binding site" evidence="1">
    <location>
        <position position="672"/>
    </location>
    <ligand>
        <name>Mg(2+)</name>
        <dbReference type="ChEBI" id="CHEBI:18420"/>
        <label>3</label>
    </ligand>
</feature>
<feature type="binding site" evidence="1">
    <location>
        <position position="676"/>
    </location>
    <ligand>
        <name>Mg(2+)</name>
        <dbReference type="ChEBI" id="CHEBI:18420"/>
        <label>3</label>
    </ligand>
</feature>